<gene>
    <name evidence="1" type="primary">ogt</name>
    <name type="ordered locus">PH1835</name>
</gene>
<dbReference type="EC" id="2.1.1.63" evidence="1"/>
<dbReference type="EMBL" id="BA000001">
    <property type="protein sequence ID" value="BAA30955.1"/>
    <property type="status" value="ALT_INIT"/>
    <property type="molecule type" value="Genomic_DNA"/>
</dbReference>
<dbReference type="PIR" id="D71195">
    <property type="entry name" value="D71195"/>
</dbReference>
<dbReference type="RefSeq" id="WP_048053490.1">
    <property type="nucleotide sequence ID" value="NC_000961.1"/>
</dbReference>
<dbReference type="SMR" id="O59499"/>
<dbReference type="STRING" id="70601.gene:9378838"/>
<dbReference type="EnsemblBacteria" id="BAA30955">
    <property type="protein sequence ID" value="BAA30955"/>
    <property type="gene ID" value="BAA30955"/>
</dbReference>
<dbReference type="GeneID" id="1442676"/>
<dbReference type="KEGG" id="pho:PH1835"/>
<dbReference type="eggNOG" id="arCOG02724">
    <property type="taxonomic scope" value="Archaea"/>
</dbReference>
<dbReference type="OrthoDB" id="372118at2157"/>
<dbReference type="Proteomes" id="UP000000752">
    <property type="component" value="Chromosome"/>
</dbReference>
<dbReference type="GO" id="GO:0005737">
    <property type="term" value="C:cytoplasm"/>
    <property type="evidence" value="ECO:0007669"/>
    <property type="project" value="UniProtKB-SubCell"/>
</dbReference>
<dbReference type="GO" id="GO:0003908">
    <property type="term" value="F:methylated-DNA-[protein]-cysteine S-methyltransferase activity"/>
    <property type="evidence" value="ECO:0007669"/>
    <property type="project" value="UniProtKB-EC"/>
</dbReference>
<dbReference type="GO" id="GO:0006281">
    <property type="term" value="P:DNA repair"/>
    <property type="evidence" value="ECO:0007669"/>
    <property type="project" value="UniProtKB-KW"/>
</dbReference>
<dbReference type="GO" id="GO:0032259">
    <property type="term" value="P:methylation"/>
    <property type="evidence" value="ECO:0007669"/>
    <property type="project" value="UniProtKB-KW"/>
</dbReference>
<dbReference type="CDD" id="cd06445">
    <property type="entry name" value="ATase"/>
    <property type="match status" value="1"/>
</dbReference>
<dbReference type="Gene3D" id="3.30.160.70">
    <property type="entry name" value="Methylated DNA-protein cysteine methyltransferase domain"/>
    <property type="match status" value="1"/>
</dbReference>
<dbReference type="Gene3D" id="1.10.10.10">
    <property type="entry name" value="Winged helix-like DNA-binding domain superfamily/Winged helix DNA-binding domain"/>
    <property type="match status" value="1"/>
</dbReference>
<dbReference type="InterPro" id="IPR054936">
    <property type="entry name" value="DNA_protcyst_Mta_Thcoc"/>
</dbReference>
<dbReference type="InterPro" id="IPR001497">
    <property type="entry name" value="MethylDNA_cys_MeTrfase_AS"/>
</dbReference>
<dbReference type="InterPro" id="IPR014048">
    <property type="entry name" value="MethylDNA_cys_MeTrfase_DNA-bd"/>
</dbReference>
<dbReference type="InterPro" id="IPR036217">
    <property type="entry name" value="MethylDNA_cys_MeTrfase_DNAb"/>
</dbReference>
<dbReference type="InterPro" id="IPR015236">
    <property type="entry name" value="MGMT_N"/>
</dbReference>
<dbReference type="InterPro" id="IPR036631">
    <property type="entry name" value="MGMT_N_sf"/>
</dbReference>
<dbReference type="InterPro" id="IPR036388">
    <property type="entry name" value="WH-like_DNA-bd_sf"/>
</dbReference>
<dbReference type="NCBIfam" id="NF041132">
    <property type="entry name" value="DNA_protcyst_Mta_Thcoc"/>
    <property type="match status" value="1"/>
</dbReference>
<dbReference type="NCBIfam" id="TIGR00589">
    <property type="entry name" value="ogt"/>
    <property type="match status" value="1"/>
</dbReference>
<dbReference type="NCBIfam" id="NF003022">
    <property type="entry name" value="PRK03887.1"/>
    <property type="match status" value="1"/>
</dbReference>
<dbReference type="PANTHER" id="PTHR46460">
    <property type="entry name" value="METHYLATED-DNA--PROTEIN-CYSTEINE METHYLTRANSFERASE"/>
    <property type="match status" value="1"/>
</dbReference>
<dbReference type="PANTHER" id="PTHR46460:SF1">
    <property type="entry name" value="METHYLATED-DNA--PROTEIN-CYSTEINE METHYLTRANSFERASE"/>
    <property type="match status" value="1"/>
</dbReference>
<dbReference type="Pfam" id="PF01035">
    <property type="entry name" value="DNA_binding_1"/>
    <property type="match status" value="1"/>
</dbReference>
<dbReference type="Pfam" id="PF09153">
    <property type="entry name" value="MGMT_N"/>
    <property type="match status" value="1"/>
</dbReference>
<dbReference type="SUPFAM" id="SSF53155">
    <property type="entry name" value="Methylated DNA-protein cysteine methyltransferase domain"/>
    <property type="match status" value="1"/>
</dbReference>
<dbReference type="SUPFAM" id="SSF46767">
    <property type="entry name" value="Methylated DNA-protein cysteine methyltransferase, C-terminal domain"/>
    <property type="match status" value="1"/>
</dbReference>
<dbReference type="PROSITE" id="PS00374">
    <property type="entry name" value="MGMT"/>
    <property type="match status" value="1"/>
</dbReference>
<protein>
    <recommendedName>
        <fullName evidence="1">Methylated-DNA--protein-cysteine methyltransferase</fullName>
        <ecNumber evidence="1">2.1.1.63</ecNumber>
    </recommendedName>
    <alternativeName>
        <fullName evidence="1">6-O-methylguanine-DNA methyltransferase</fullName>
        <shortName evidence="1">MGMT</shortName>
    </alternativeName>
    <alternativeName>
        <fullName evidence="1">O-6-methylguanine-DNA-alkyltransferase</fullName>
    </alternativeName>
</protein>
<sequence length="172" mass="19614">MLTYKTFKILGREILIGVVWEEKIQGIAYSLDGLEFLKDQLSRVTSHLKSRGVKVNLLEEKSRYPDLVFDVLKGKIGNEKGFEELSLEGLTRFEIKVYSWLVKNVKRGEVITYGKVAKALKTSPIAVGGAMKRNPYPIIVPCHRVVGKNNPWLYTPKPSYKKFLLEVEGWIS</sequence>
<organism>
    <name type="scientific">Pyrococcus horikoshii (strain ATCC 700860 / DSM 12428 / JCM 9974 / NBRC 100139 / OT-3)</name>
    <dbReference type="NCBI Taxonomy" id="70601"/>
    <lineage>
        <taxon>Archaea</taxon>
        <taxon>Methanobacteriati</taxon>
        <taxon>Methanobacteriota</taxon>
        <taxon>Thermococci</taxon>
        <taxon>Thermococcales</taxon>
        <taxon>Thermococcaceae</taxon>
        <taxon>Pyrococcus</taxon>
    </lineage>
</organism>
<reference key="1">
    <citation type="journal article" date="1998" name="DNA Res.">
        <title>Complete sequence and gene organization of the genome of a hyper-thermophilic archaebacterium, Pyrococcus horikoshii OT3.</title>
        <authorList>
            <person name="Kawarabayasi Y."/>
            <person name="Sawada M."/>
            <person name="Horikawa H."/>
            <person name="Haikawa Y."/>
            <person name="Hino Y."/>
            <person name="Yamamoto S."/>
            <person name="Sekine M."/>
            <person name="Baba S."/>
            <person name="Kosugi H."/>
            <person name="Hosoyama A."/>
            <person name="Nagai Y."/>
            <person name="Sakai M."/>
            <person name="Ogura K."/>
            <person name="Otsuka R."/>
            <person name="Nakazawa H."/>
            <person name="Takamiya M."/>
            <person name="Ohfuku Y."/>
            <person name="Funahashi T."/>
            <person name="Tanaka T."/>
            <person name="Kudoh Y."/>
            <person name="Yamazaki J."/>
            <person name="Kushida N."/>
            <person name="Oguchi A."/>
            <person name="Aoki K."/>
            <person name="Yoshizawa T."/>
            <person name="Nakamura Y."/>
            <person name="Robb F.T."/>
            <person name="Horikoshi K."/>
            <person name="Masuchi Y."/>
            <person name="Shizuya H."/>
            <person name="Kikuchi H."/>
        </authorList>
    </citation>
    <scope>NUCLEOTIDE SEQUENCE [LARGE SCALE GENOMIC DNA]</scope>
    <source>
        <strain>ATCC 700860 / DSM 12428 / JCM 9974 / NBRC 100139 / OT-3</strain>
    </source>
</reference>
<evidence type="ECO:0000250" key="1">
    <source>
        <dbReference type="UniProtKB" id="O74023"/>
    </source>
</evidence>
<evidence type="ECO:0000305" key="2"/>
<proteinExistence type="inferred from homology"/>
<comment type="function">
    <text evidence="1">Involved in the cellular defense against the biological effects of O6-methylguanine (O6-MeG) and O4-methylthymine (O4-MeT) in DNA. Repairs the methylated nucleobase in DNA by stoichiometrically transferring the methyl group to a cysteine residue in the enzyme. This is a suicide reaction: the enzyme is irreversibly inactivated.</text>
</comment>
<comment type="catalytic activity">
    <reaction evidence="1">
        <text>a 6-O-methyl-2'-deoxyguanosine in DNA + L-cysteinyl-[protein] = S-methyl-L-cysteinyl-[protein] + a 2'-deoxyguanosine in DNA</text>
        <dbReference type="Rhea" id="RHEA:24000"/>
        <dbReference type="Rhea" id="RHEA-COMP:10131"/>
        <dbReference type="Rhea" id="RHEA-COMP:10132"/>
        <dbReference type="Rhea" id="RHEA-COMP:11367"/>
        <dbReference type="Rhea" id="RHEA-COMP:11368"/>
        <dbReference type="ChEBI" id="CHEBI:29950"/>
        <dbReference type="ChEBI" id="CHEBI:82612"/>
        <dbReference type="ChEBI" id="CHEBI:85445"/>
        <dbReference type="ChEBI" id="CHEBI:85448"/>
        <dbReference type="EC" id="2.1.1.63"/>
    </reaction>
</comment>
<comment type="catalytic activity">
    <reaction evidence="1">
        <text>a 4-O-methyl-thymidine in DNA + L-cysteinyl-[protein] = a thymidine in DNA + S-methyl-L-cysteinyl-[protein]</text>
        <dbReference type="Rhea" id="RHEA:53428"/>
        <dbReference type="Rhea" id="RHEA-COMP:10131"/>
        <dbReference type="Rhea" id="RHEA-COMP:10132"/>
        <dbReference type="Rhea" id="RHEA-COMP:13555"/>
        <dbReference type="Rhea" id="RHEA-COMP:13556"/>
        <dbReference type="ChEBI" id="CHEBI:29950"/>
        <dbReference type="ChEBI" id="CHEBI:82612"/>
        <dbReference type="ChEBI" id="CHEBI:137386"/>
        <dbReference type="ChEBI" id="CHEBI:137387"/>
        <dbReference type="EC" id="2.1.1.63"/>
    </reaction>
</comment>
<comment type="subcellular location">
    <subcellularLocation>
        <location evidence="1">Cytoplasm</location>
    </subcellularLocation>
</comment>
<comment type="miscellaneous">
    <text evidence="1">This enzyme catalyzes only one turnover and therefore is not strictly catalytic. According to one definition, an enzyme is a biocatalyst that acts repeatedly and over many reaction cycles.</text>
</comment>
<comment type="similarity">
    <text evidence="1">Belongs to the MGMT family.</text>
</comment>
<comment type="sequence caution" evidence="2">
    <conflict type="erroneous initiation">
        <sequence resource="EMBL-CDS" id="BAA30955"/>
    </conflict>
</comment>
<name>OGT_PYRHO</name>
<accession>O59499</accession>
<feature type="chain" id="PRO_0000139384" description="Methylated-DNA--protein-cysteine methyltransferase">
    <location>
        <begin position="1"/>
        <end position="172"/>
    </location>
</feature>
<feature type="active site" description="Nucleophile; methyl group acceptor" evidence="1">
    <location>
        <position position="142"/>
    </location>
</feature>
<keyword id="KW-0963">Cytoplasm</keyword>
<keyword id="KW-0227">DNA damage</keyword>
<keyword id="KW-0234">DNA repair</keyword>
<keyword id="KW-0489">Methyltransferase</keyword>
<keyword id="KW-0808">Transferase</keyword>